<keyword id="KW-0067">ATP-binding</keyword>
<keyword id="KW-0963">Cytoplasm</keyword>
<keyword id="KW-0436">Ligase</keyword>
<keyword id="KW-0547">Nucleotide-binding</keyword>
<keyword id="KW-0566">Pantothenate biosynthesis</keyword>
<keyword id="KW-1185">Reference proteome</keyword>
<accession>Q8FL31</accession>
<feature type="chain" id="PRO_0000128231" description="Pantothenate synthetase">
    <location>
        <begin position="1"/>
        <end position="283"/>
    </location>
</feature>
<feature type="active site" description="Proton donor" evidence="1">
    <location>
        <position position="37"/>
    </location>
</feature>
<feature type="binding site" evidence="1">
    <location>
        <begin position="30"/>
        <end position="37"/>
    </location>
    <ligand>
        <name>ATP</name>
        <dbReference type="ChEBI" id="CHEBI:30616"/>
    </ligand>
</feature>
<feature type="binding site" evidence="1">
    <location>
        <position position="61"/>
    </location>
    <ligand>
        <name>(R)-pantoate</name>
        <dbReference type="ChEBI" id="CHEBI:15980"/>
    </ligand>
</feature>
<feature type="binding site" evidence="1">
    <location>
        <position position="61"/>
    </location>
    <ligand>
        <name>beta-alanine</name>
        <dbReference type="ChEBI" id="CHEBI:57966"/>
    </ligand>
</feature>
<feature type="binding site" evidence="1">
    <location>
        <begin position="149"/>
        <end position="152"/>
    </location>
    <ligand>
        <name>ATP</name>
        <dbReference type="ChEBI" id="CHEBI:30616"/>
    </ligand>
</feature>
<feature type="binding site" evidence="1">
    <location>
        <position position="155"/>
    </location>
    <ligand>
        <name>(R)-pantoate</name>
        <dbReference type="ChEBI" id="CHEBI:15980"/>
    </ligand>
</feature>
<feature type="binding site" evidence="1">
    <location>
        <begin position="186"/>
        <end position="189"/>
    </location>
    <ligand>
        <name>ATP</name>
        <dbReference type="ChEBI" id="CHEBI:30616"/>
    </ligand>
</feature>
<name>PANC_ECOL6</name>
<comment type="function">
    <text evidence="1">Catalyzes the condensation of pantoate with beta-alanine in an ATP-dependent reaction via a pantoyl-adenylate intermediate.</text>
</comment>
<comment type="catalytic activity">
    <reaction evidence="1">
        <text>(R)-pantoate + beta-alanine + ATP = (R)-pantothenate + AMP + diphosphate + H(+)</text>
        <dbReference type="Rhea" id="RHEA:10912"/>
        <dbReference type="ChEBI" id="CHEBI:15378"/>
        <dbReference type="ChEBI" id="CHEBI:15980"/>
        <dbReference type="ChEBI" id="CHEBI:29032"/>
        <dbReference type="ChEBI" id="CHEBI:30616"/>
        <dbReference type="ChEBI" id="CHEBI:33019"/>
        <dbReference type="ChEBI" id="CHEBI:57966"/>
        <dbReference type="ChEBI" id="CHEBI:456215"/>
        <dbReference type="EC" id="6.3.2.1"/>
    </reaction>
</comment>
<comment type="pathway">
    <text evidence="1">Cofactor biosynthesis; (R)-pantothenate biosynthesis; (R)-pantothenate from (R)-pantoate and beta-alanine: step 1/1.</text>
</comment>
<comment type="subunit">
    <text evidence="1">Homodimer.</text>
</comment>
<comment type="subcellular location">
    <subcellularLocation>
        <location evidence="1">Cytoplasm</location>
    </subcellularLocation>
</comment>
<comment type="miscellaneous">
    <text evidence="1">The reaction proceeds by a bi uni uni bi ping pong mechanism.</text>
</comment>
<comment type="similarity">
    <text evidence="1">Belongs to the pantothenate synthetase family.</text>
</comment>
<comment type="sequence caution" evidence="2">
    <conflict type="frameshift">
        <sequence resource="EMBL-CDS" id="AAN78658"/>
    </conflict>
</comment>
<sequence>MLIIETLPLLRQQIRRLRMEGKRVALVPTMGNLHDGHMKLVDEAKARADVVVVSIFVNPMQFDRPEDLARYPRTLQEDCEKLNKRKVDLVFAPSVKEIYPNGTETHTYVDVPGLSTMLEGASRPGHFRGVSTIVSKLFNLVQPDIACFGEKDFQQLALIRKMVADMGFDIEIVGVPIMRAKDGLALSSRNGYLTAEQRKIAPGLYKVLSSIADKLQAGERDLDEIIAIAGQELNEKGFRADDIQIRDADTLLEVSENSKRAVILVAAWLGDARLIDNKMVELA</sequence>
<dbReference type="EC" id="6.3.2.1" evidence="1"/>
<dbReference type="EMBL" id="AE014075">
    <property type="protein sequence ID" value="AAN78658.1"/>
    <property type="status" value="ALT_FRAME"/>
    <property type="molecule type" value="Genomic_DNA"/>
</dbReference>
<dbReference type="RefSeq" id="WP_000905370.1">
    <property type="nucleotide sequence ID" value="NZ_CP051263.1"/>
</dbReference>
<dbReference type="SMR" id="Q8FL31"/>
<dbReference type="STRING" id="199310.c0164"/>
<dbReference type="KEGG" id="ecc:c0164"/>
<dbReference type="eggNOG" id="COG0414">
    <property type="taxonomic scope" value="Bacteria"/>
</dbReference>
<dbReference type="HOGENOM" id="CLU_047148_0_0_6"/>
<dbReference type="UniPathway" id="UPA00028">
    <property type="reaction ID" value="UER00005"/>
</dbReference>
<dbReference type="Proteomes" id="UP000001410">
    <property type="component" value="Chromosome"/>
</dbReference>
<dbReference type="GO" id="GO:0005829">
    <property type="term" value="C:cytosol"/>
    <property type="evidence" value="ECO:0007669"/>
    <property type="project" value="TreeGrafter"/>
</dbReference>
<dbReference type="GO" id="GO:0005524">
    <property type="term" value="F:ATP binding"/>
    <property type="evidence" value="ECO:0007669"/>
    <property type="project" value="UniProtKB-KW"/>
</dbReference>
<dbReference type="GO" id="GO:0004592">
    <property type="term" value="F:pantoate-beta-alanine ligase activity"/>
    <property type="evidence" value="ECO:0007669"/>
    <property type="project" value="UniProtKB-UniRule"/>
</dbReference>
<dbReference type="GO" id="GO:0015940">
    <property type="term" value="P:pantothenate biosynthetic process"/>
    <property type="evidence" value="ECO:0007669"/>
    <property type="project" value="UniProtKB-UniRule"/>
</dbReference>
<dbReference type="CDD" id="cd00560">
    <property type="entry name" value="PanC"/>
    <property type="match status" value="1"/>
</dbReference>
<dbReference type="FunFam" id="3.30.1300.10:FF:000001">
    <property type="entry name" value="Pantothenate synthetase"/>
    <property type="match status" value="1"/>
</dbReference>
<dbReference type="FunFam" id="3.40.50.620:FF:000013">
    <property type="entry name" value="Pantothenate synthetase"/>
    <property type="match status" value="1"/>
</dbReference>
<dbReference type="Gene3D" id="3.40.50.620">
    <property type="entry name" value="HUPs"/>
    <property type="match status" value="1"/>
</dbReference>
<dbReference type="Gene3D" id="3.30.1300.10">
    <property type="entry name" value="Pantoate-beta-alanine ligase, C-terminal domain"/>
    <property type="match status" value="1"/>
</dbReference>
<dbReference type="HAMAP" id="MF_00158">
    <property type="entry name" value="PanC"/>
    <property type="match status" value="1"/>
</dbReference>
<dbReference type="InterPro" id="IPR004821">
    <property type="entry name" value="Cyt_trans-like"/>
</dbReference>
<dbReference type="InterPro" id="IPR003721">
    <property type="entry name" value="Pantoate_ligase"/>
</dbReference>
<dbReference type="InterPro" id="IPR042176">
    <property type="entry name" value="Pantoate_ligase_C"/>
</dbReference>
<dbReference type="InterPro" id="IPR014729">
    <property type="entry name" value="Rossmann-like_a/b/a_fold"/>
</dbReference>
<dbReference type="NCBIfam" id="TIGR00125">
    <property type="entry name" value="cyt_tran_rel"/>
    <property type="match status" value="1"/>
</dbReference>
<dbReference type="NCBIfam" id="TIGR00018">
    <property type="entry name" value="panC"/>
    <property type="match status" value="1"/>
</dbReference>
<dbReference type="PANTHER" id="PTHR21299">
    <property type="entry name" value="CYTIDYLATE KINASE/PANTOATE-BETA-ALANINE LIGASE"/>
    <property type="match status" value="1"/>
</dbReference>
<dbReference type="PANTHER" id="PTHR21299:SF1">
    <property type="entry name" value="PANTOATE--BETA-ALANINE LIGASE"/>
    <property type="match status" value="1"/>
</dbReference>
<dbReference type="Pfam" id="PF02569">
    <property type="entry name" value="Pantoate_ligase"/>
    <property type="match status" value="1"/>
</dbReference>
<dbReference type="SUPFAM" id="SSF52374">
    <property type="entry name" value="Nucleotidylyl transferase"/>
    <property type="match status" value="1"/>
</dbReference>
<reference key="1">
    <citation type="journal article" date="2002" name="Proc. Natl. Acad. Sci. U.S.A.">
        <title>Extensive mosaic structure revealed by the complete genome sequence of uropathogenic Escherichia coli.</title>
        <authorList>
            <person name="Welch R.A."/>
            <person name="Burland V."/>
            <person name="Plunkett G. III"/>
            <person name="Redford P."/>
            <person name="Roesch P."/>
            <person name="Rasko D."/>
            <person name="Buckles E.L."/>
            <person name="Liou S.-R."/>
            <person name="Boutin A."/>
            <person name="Hackett J."/>
            <person name="Stroud D."/>
            <person name="Mayhew G.F."/>
            <person name="Rose D.J."/>
            <person name="Zhou S."/>
            <person name="Schwartz D.C."/>
            <person name="Perna N.T."/>
            <person name="Mobley H.L.T."/>
            <person name="Donnenberg M.S."/>
            <person name="Blattner F.R."/>
        </authorList>
    </citation>
    <scope>NUCLEOTIDE SEQUENCE [LARGE SCALE GENOMIC DNA]</scope>
    <source>
        <strain>CFT073 / ATCC 700928 / UPEC</strain>
    </source>
</reference>
<protein>
    <recommendedName>
        <fullName evidence="1">Pantothenate synthetase</fullName>
        <shortName evidence="1">PS</shortName>
        <ecNumber evidence="1">6.3.2.1</ecNumber>
    </recommendedName>
    <alternativeName>
        <fullName evidence="1">Pantoate--beta-alanine ligase</fullName>
    </alternativeName>
    <alternativeName>
        <fullName evidence="1">Pantoate-activating enzyme</fullName>
    </alternativeName>
</protein>
<evidence type="ECO:0000255" key="1">
    <source>
        <dbReference type="HAMAP-Rule" id="MF_00158"/>
    </source>
</evidence>
<evidence type="ECO:0000305" key="2"/>
<organism>
    <name type="scientific">Escherichia coli O6:H1 (strain CFT073 / ATCC 700928 / UPEC)</name>
    <dbReference type="NCBI Taxonomy" id="199310"/>
    <lineage>
        <taxon>Bacteria</taxon>
        <taxon>Pseudomonadati</taxon>
        <taxon>Pseudomonadota</taxon>
        <taxon>Gammaproteobacteria</taxon>
        <taxon>Enterobacterales</taxon>
        <taxon>Enterobacteriaceae</taxon>
        <taxon>Escherichia</taxon>
    </lineage>
</organism>
<gene>
    <name evidence="1" type="primary">panC</name>
    <name type="ordered locus">c0164</name>
</gene>
<proteinExistence type="inferred from homology"/>